<protein>
    <recommendedName>
        <fullName evidence="1">Aminomethyltransferase</fullName>
        <ecNumber evidence="1">2.1.2.10</ecNumber>
    </recommendedName>
    <alternativeName>
        <fullName evidence="1">Glycine cleavage system T protein</fullName>
    </alternativeName>
</protein>
<dbReference type="EC" id="2.1.2.10" evidence="1"/>
<dbReference type="EMBL" id="CP000934">
    <property type="protein sequence ID" value="ACE85491.1"/>
    <property type="molecule type" value="Genomic_DNA"/>
</dbReference>
<dbReference type="RefSeq" id="WP_012486103.1">
    <property type="nucleotide sequence ID" value="NC_010995.1"/>
</dbReference>
<dbReference type="SMR" id="B3PI82"/>
<dbReference type="STRING" id="498211.CJA_0421"/>
<dbReference type="KEGG" id="cja:CJA_0421"/>
<dbReference type="eggNOG" id="COG0404">
    <property type="taxonomic scope" value="Bacteria"/>
</dbReference>
<dbReference type="HOGENOM" id="CLU_007884_10_2_6"/>
<dbReference type="OrthoDB" id="9774591at2"/>
<dbReference type="Proteomes" id="UP000001036">
    <property type="component" value="Chromosome"/>
</dbReference>
<dbReference type="GO" id="GO:0005829">
    <property type="term" value="C:cytosol"/>
    <property type="evidence" value="ECO:0007669"/>
    <property type="project" value="TreeGrafter"/>
</dbReference>
<dbReference type="GO" id="GO:0005960">
    <property type="term" value="C:glycine cleavage complex"/>
    <property type="evidence" value="ECO:0007669"/>
    <property type="project" value="InterPro"/>
</dbReference>
<dbReference type="GO" id="GO:0004047">
    <property type="term" value="F:aminomethyltransferase activity"/>
    <property type="evidence" value="ECO:0007669"/>
    <property type="project" value="UniProtKB-UniRule"/>
</dbReference>
<dbReference type="GO" id="GO:0008483">
    <property type="term" value="F:transaminase activity"/>
    <property type="evidence" value="ECO:0007669"/>
    <property type="project" value="UniProtKB-KW"/>
</dbReference>
<dbReference type="GO" id="GO:0019464">
    <property type="term" value="P:glycine decarboxylation via glycine cleavage system"/>
    <property type="evidence" value="ECO:0007669"/>
    <property type="project" value="UniProtKB-UniRule"/>
</dbReference>
<dbReference type="FunFam" id="3.30.70.1400:FF:000001">
    <property type="entry name" value="Aminomethyltransferase"/>
    <property type="match status" value="1"/>
</dbReference>
<dbReference type="FunFam" id="4.10.1250.10:FF:000001">
    <property type="entry name" value="Aminomethyltransferase"/>
    <property type="match status" value="1"/>
</dbReference>
<dbReference type="Gene3D" id="2.40.30.110">
    <property type="entry name" value="Aminomethyltransferase beta-barrel domains"/>
    <property type="match status" value="1"/>
</dbReference>
<dbReference type="Gene3D" id="3.30.70.1400">
    <property type="entry name" value="Aminomethyltransferase beta-barrel domains"/>
    <property type="match status" value="1"/>
</dbReference>
<dbReference type="Gene3D" id="4.10.1250.10">
    <property type="entry name" value="Aminomethyltransferase fragment"/>
    <property type="match status" value="1"/>
</dbReference>
<dbReference type="Gene3D" id="3.30.1360.120">
    <property type="entry name" value="Probable tRNA modification gtpase trme, domain 1"/>
    <property type="match status" value="1"/>
</dbReference>
<dbReference type="HAMAP" id="MF_00259">
    <property type="entry name" value="GcvT"/>
    <property type="match status" value="1"/>
</dbReference>
<dbReference type="InterPro" id="IPR006223">
    <property type="entry name" value="GCS_T"/>
</dbReference>
<dbReference type="InterPro" id="IPR022903">
    <property type="entry name" value="GCS_T_bac"/>
</dbReference>
<dbReference type="InterPro" id="IPR013977">
    <property type="entry name" value="GCST_C"/>
</dbReference>
<dbReference type="InterPro" id="IPR006222">
    <property type="entry name" value="GCV_T_N"/>
</dbReference>
<dbReference type="InterPro" id="IPR028896">
    <property type="entry name" value="GcvT/YgfZ/DmdA"/>
</dbReference>
<dbReference type="InterPro" id="IPR029043">
    <property type="entry name" value="GcvT/YgfZ_C"/>
</dbReference>
<dbReference type="InterPro" id="IPR027266">
    <property type="entry name" value="TrmE/GcvT_dom1"/>
</dbReference>
<dbReference type="NCBIfam" id="TIGR00528">
    <property type="entry name" value="gcvT"/>
    <property type="match status" value="1"/>
</dbReference>
<dbReference type="NCBIfam" id="NF001567">
    <property type="entry name" value="PRK00389.1"/>
    <property type="match status" value="1"/>
</dbReference>
<dbReference type="PANTHER" id="PTHR43757">
    <property type="entry name" value="AMINOMETHYLTRANSFERASE"/>
    <property type="match status" value="1"/>
</dbReference>
<dbReference type="PANTHER" id="PTHR43757:SF2">
    <property type="entry name" value="AMINOMETHYLTRANSFERASE, MITOCHONDRIAL"/>
    <property type="match status" value="1"/>
</dbReference>
<dbReference type="Pfam" id="PF01571">
    <property type="entry name" value="GCV_T"/>
    <property type="match status" value="1"/>
</dbReference>
<dbReference type="Pfam" id="PF08669">
    <property type="entry name" value="GCV_T_C"/>
    <property type="match status" value="1"/>
</dbReference>
<dbReference type="PIRSF" id="PIRSF006487">
    <property type="entry name" value="GcvT"/>
    <property type="match status" value="1"/>
</dbReference>
<dbReference type="SUPFAM" id="SSF101790">
    <property type="entry name" value="Aminomethyltransferase beta-barrel domain"/>
    <property type="match status" value="1"/>
</dbReference>
<dbReference type="SUPFAM" id="SSF103025">
    <property type="entry name" value="Folate-binding domain"/>
    <property type="match status" value="1"/>
</dbReference>
<reference key="1">
    <citation type="journal article" date="2008" name="J. Bacteriol.">
        <title>Insights into plant cell wall degradation from the genome sequence of the soil bacterium Cellvibrio japonicus.</title>
        <authorList>
            <person name="DeBoy R.T."/>
            <person name="Mongodin E.F."/>
            <person name="Fouts D.E."/>
            <person name="Tailford L.E."/>
            <person name="Khouri H."/>
            <person name="Emerson J.B."/>
            <person name="Mohamoud Y."/>
            <person name="Watkins K."/>
            <person name="Henrissat B."/>
            <person name="Gilbert H.J."/>
            <person name="Nelson K.E."/>
        </authorList>
    </citation>
    <scope>NUCLEOTIDE SEQUENCE [LARGE SCALE GENOMIC DNA]</scope>
    <source>
        <strain>Ueda107</strain>
    </source>
</reference>
<organism>
    <name type="scientific">Cellvibrio japonicus (strain Ueda107)</name>
    <name type="common">Pseudomonas fluorescens subsp. cellulosa</name>
    <dbReference type="NCBI Taxonomy" id="498211"/>
    <lineage>
        <taxon>Bacteria</taxon>
        <taxon>Pseudomonadati</taxon>
        <taxon>Pseudomonadota</taxon>
        <taxon>Gammaproteobacteria</taxon>
        <taxon>Cellvibrionales</taxon>
        <taxon>Cellvibrionaceae</taxon>
        <taxon>Cellvibrio</taxon>
    </lineage>
</organism>
<keyword id="KW-0032">Aminotransferase</keyword>
<keyword id="KW-1185">Reference proteome</keyword>
<keyword id="KW-0808">Transferase</keyword>
<name>GCST_CELJU</name>
<accession>B3PI82</accession>
<gene>
    <name evidence="1" type="primary">gcvT</name>
    <name type="ordered locus">CJA_0421</name>
</gene>
<feature type="chain" id="PRO_1000114085" description="Aminomethyltransferase">
    <location>
        <begin position="1"/>
        <end position="371"/>
    </location>
</feature>
<evidence type="ECO:0000255" key="1">
    <source>
        <dbReference type="HAMAP-Rule" id="MF_00259"/>
    </source>
</evidence>
<comment type="function">
    <text evidence="1">The glycine cleavage system catalyzes the degradation of glycine.</text>
</comment>
<comment type="catalytic activity">
    <reaction evidence="1">
        <text>N(6)-[(R)-S(8)-aminomethyldihydrolipoyl]-L-lysyl-[protein] + (6S)-5,6,7,8-tetrahydrofolate = N(6)-[(R)-dihydrolipoyl]-L-lysyl-[protein] + (6R)-5,10-methylene-5,6,7,8-tetrahydrofolate + NH4(+)</text>
        <dbReference type="Rhea" id="RHEA:16945"/>
        <dbReference type="Rhea" id="RHEA-COMP:10475"/>
        <dbReference type="Rhea" id="RHEA-COMP:10492"/>
        <dbReference type="ChEBI" id="CHEBI:15636"/>
        <dbReference type="ChEBI" id="CHEBI:28938"/>
        <dbReference type="ChEBI" id="CHEBI:57453"/>
        <dbReference type="ChEBI" id="CHEBI:83100"/>
        <dbReference type="ChEBI" id="CHEBI:83143"/>
        <dbReference type="EC" id="2.1.2.10"/>
    </reaction>
</comment>
<comment type="subunit">
    <text evidence="1">The glycine cleavage system is composed of four proteins: P, T, L and H.</text>
</comment>
<comment type="similarity">
    <text evidence="1">Belongs to the GcvT family.</text>
</comment>
<sequence>MGNKTALYDIHQSMGGKIVDFGGWDMPLHYGSQIDEHHKVRQHAGMFDVSHMTVVDVTGSDAKAYLQYLLANDVAKLDNLVGKALYSGMLNEQGGVIDDLIVYNMGDWYRVVVNCSTREKDLAWMSQVANNYQVKLQERADLAMIAVQGPQAIAITKTLVSAEAATLIDNLQVFQGLASTQQGSDWFFGRTGYTGEDGLEIMLPNEQAGTFWQALAAAGVAPCGLGARDTLRLEAGMNLYGHEMDENISPLAANMGWTIAWQPEARNFIGRAALTAEKSAGQRHKLVGLVLRERGVLRAEQLVHIANSDERGVITSGTFSPSLGYSIALARVPVTQVPLTPGAQCQVEMRGKLVTVDVVAPGFVRQGKALV</sequence>
<proteinExistence type="inferred from homology"/>